<gene>
    <name evidence="1" type="primary">rplB</name>
    <name evidence="1" type="synonym">rpl2</name>
    <name type="ordered locus">SynWH7803_0431</name>
</gene>
<reference key="1">
    <citation type="submission" date="2006-05" db="EMBL/GenBank/DDBJ databases">
        <authorList>
            <consortium name="Genoscope"/>
        </authorList>
    </citation>
    <scope>NUCLEOTIDE SEQUENCE [LARGE SCALE GENOMIC DNA]</scope>
    <source>
        <strain>WH7803</strain>
    </source>
</reference>
<feature type="chain" id="PRO_0000310033" description="Large ribosomal subunit protein uL2">
    <location>
        <begin position="1"/>
        <end position="287"/>
    </location>
</feature>
<feature type="region of interest" description="Disordered" evidence="2">
    <location>
        <begin position="221"/>
        <end position="287"/>
    </location>
</feature>
<feature type="compositionally biased region" description="Basic residues" evidence="2">
    <location>
        <begin position="258"/>
        <end position="287"/>
    </location>
</feature>
<proteinExistence type="inferred from homology"/>
<evidence type="ECO:0000255" key="1">
    <source>
        <dbReference type="HAMAP-Rule" id="MF_01320"/>
    </source>
</evidence>
<evidence type="ECO:0000256" key="2">
    <source>
        <dbReference type="SAM" id="MobiDB-lite"/>
    </source>
</evidence>
<evidence type="ECO:0000305" key="3"/>
<comment type="function">
    <text evidence="1">One of the primary rRNA binding proteins. Required for association of the 30S and 50S subunits to form the 70S ribosome, for tRNA binding and peptide bond formation. It has been suggested to have peptidyltransferase activity; this is somewhat controversial. Makes several contacts with the 16S rRNA in the 70S ribosome.</text>
</comment>
<comment type="subunit">
    <text evidence="1">Part of the 50S ribosomal subunit. Forms a bridge to the 30S subunit in the 70S ribosome.</text>
</comment>
<comment type="similarity">
    <text evidence="1">Belongs to the universal ribosomal protein uL2 family.</text>
</comment>
<accession>A5GIU2</accession>
<organism>
    <name type="scientific">Synechococcus sp. (strain WH7803)</name>
    <dbReference type="NCBI Taxonomy" id="32051"/>
    <lineage>
        <taxon>Bacteria</taxon>
        <taxon>Bacillati</taxon>
        <taxon>Cyanobacteriota</taxon>
        <taxon>Cyanophyceae</taxon>
        <taxon>Synechococcales</taxon>
        <taxon>Synechococcaceae</taxon>
        <taxon>Synechococcus</taxon>
    </lineage>
</organism>
<protein>
    <recommendedName>
        <fullName evidence="1">Large ribosomal subunit protein uL2</fullName>
    </recommendedName>
    <alternativeName>
        <fullName evidence="3">50S ribosomal protein L2</fullName>
    </alternativeName>
</protein>
<keyword id="KW-1185">Reference proteome</keyword>
<keyword id="KW-0687">Ribonucleoprotein</keyword>
<keyword id="KW-0689">Ribosomal protein</keyword>
<keyword id="KW-0694">RNA-binding</keyword>
<keyword id="KW-0699">rRNA-binding</keyword>
<sequence length="287" mass="31625">MAIRSFRPYTPGTRTRVVTDFSEVTGRKPERSLVVSKHRRKGRNNRGVITCRHRGGGHKRQYRVVDFRRNKHGVPAKVAAIHYDPHRNARLALLFYTDGEKRYILAPAGVTVGQTVISGPDAPIEDGNAMPLSSVPLGSSVHCVELYAGRGGQMVRTAGASAQVMAKEGDYVALKLPSTEVRLVRRECYATLGEVGNSEIRNTSLGKAGRRRWLGRRPQVRGSVMNPCDHPHGGGEGRAPIGRSGPVTPWGKPALGLKTRKRNKPSNKFVLRKRRKTSKRSRGGRDS</sequence>
<dbReference type="EMBL" id="CT971583">
    <property type="protein sequence ID" value="CAK22857.1"/>
    <property type="molecule type" value="Genomic_DNA"/>
</dbReference>
<dbReference type="SMR" id="A5GIU2"/>
<dbReference type="STRING" id="32051.SynWH7803_0431"/>
<dbReference type="KEGG" id="syx:SynWH7803_0431"/>
<dbReference type="eggNOG" id="COG0090">
    <property type="taxonomic scope" value="Bacteria"/>
</dbReference>
<dbReference type="HOGENOM" id="CLU_036235_2_1_3"/>
<dbReference type="OrthoDB" id="9778722at2"/>
<dbReference type="Proteomes" id="UP000001566">
    <property type="component" value="Chromosome"/>
</dbReference>
<dbReference type="GO" id="GO:0015934">
    <property type="term" value="C:large ribosomal subunit"/>
    <property type="evidence" value="ECO:0007669"/>
    <property type="project" value="InterPro"/>
</dbReference>
<dbReference type="GO" id="GO:0019843">
    <property type="term" value="F:rRNA binding"/>
    <property type="evidence" value="ECO:0007669"/>
    <property type="project" value="UniProtKB-UniRule"/>
</dbReference>
<dbReference type="GO" id="GO:0003735">
    <property type="term" value="F:structural constituent of ribosome"/>
    <property type="evidence" value="ECO:0007669"/>
    <property type="project" value="InterPro"/>
</dbReference>
<dbReference type="GO" id="GO:0016740">
    <property type="term" value="F:transferase activity"/>
    <property type="evidence" value="ECO:0007669"/>
    <property type="project" value="InterPro"/>
</dbReference>
<dbReference type="GO" id="GO:0006412">
    <property type="term" value="P:translation"/>
    <property type="evidence" value="ECO:0007669"/>
    <property type="project" value="UniProtKB-UniRule"/>
</dbReference>
<dbReference type="FunFam" id="2.30.30.30:FF:000001">
    <property type="entry name" value="50S ribosomal protein L2"/>
    <property type="match status" value="1"/>
</dbReference>
<dbReference type="FunFam" id="2.40.50.140:FF:000003">
    <property type="entry name" value="50S ribosomal protein L2"/>
    <property type="match status" value="1"/>
</dbReference>
<dbReference type="FunFam" id="4.10.950.10:FF:000001">
    <property type="entry name" value="50S ribosomal protein L2"/>
    <property type="match status" value="1"/>
</dbReference>
<dbReference type="Gene3D" id="2.30.30.30">
    <property type="match status" value="1"/>
</dbReference>
<dbReference type="Gene3D" id="2.40.50.140">
    <property type="entry name" value="Nucleic acid-binding proteins"/>
    <property type="match status" value="1"/>
</dbReference>
<dbReference type="Gene3D" id="4.10.950.10">
    <property type="entry name" value="Ribosomal protein L2, domain 3"/>
    <property type="match status" value="1"/>
</dbReference>
<dbReference type="HAMAP" id="MF_01320_B">
    <property type="entry name" value="Ribosomal_uL2_B"/>
    <property type="match status" value="1"/>
</dbReference>
<dbReference type="InterPro" id="IPR012340">
    <property type="entry name" value="NA-bd_OB-fold"/>
</dbReference>
<dbReference type="InterPro" id="IPR014722">
    <property type="entry name" value="Rib_uL2_dom2"/>
</dbReference>
<dbReference type="InterPro" id="IPR002171">
    <property type="entry name" value="Ribosomal_uL2"/>
</dbReference>
<dbReference type="InterPro" id="IPR005880">
    <property type="entry name" value="Ribosomal_uL2_bac/org-type"/>
</dbReference>
<dbReference type="InterPro" id="IPR022669">
    <property type="entry name" value="Ribosomal_uL2_C"/>
</dbReference>
<dbReference type="InterPro" id="IPR022671">
    <property type="entry name" value="Ribosomal_uL2_CS"/>
</dbReference>
<dbReference type="InterPro" id="IPR014726">
    <property type="entry name" value="Ribosomal_uL2_dom3"/>
</dbReference>
<dbReference type="InterPro" id="IPR022666">
    <property type="entry name" value="Ribosomal_uL2_RNA-bd_dom"/>
</dbReference>
<dbReference type="InterPro" id="IPR008991">
    <property type="entry name" value="Translation_prot_SH3-like_sf"/>
</dbReference>
<dbReference type="NCBIfam" id="TIGR01171">
    <property type="entry name" value="rplB_bact"/>
    <property type="match status" value="1"/>
</dbReference>
<dbReference type="PANTHER" id="PTHR13691:SF5">
    <property type="entry name" value="LARGE RIBOSOMAL SUBUNIT PROTEIN UL2M"/>
    <property type="match status" value="1"/>
</dbReference>
<dbReference type="PANTHER" id="PTHR13691">
    <property type="entry name" value="RIBOSOMAL PROTEIN L2"/>
    <property type="match status" value="1"/>
</dbReference>
<dbReference type="Pfam" id="PF00181">
    <property type="entry name" value="Ribosomal_L2"/>
    <property type="match status" value="1"/>
</dbReference>
<dbReference type="Pfam" id="PF03947">
    <property type="entry name" value="Ribosomal_L2_C"/>
    <property type="match status" value="1"/>
</dbReference>
<dbReference type="PIRSF" id="PIRSF002158">
    <property type="entry name" value="Ribosomal_L2"/>
    <property type="match status" value="1"/>
</dbReference>
<dbReference type="SMART" id="SM01383">
    <property type="entry name" value="Ribosomal_L2"/>
    <property type="match status" value="1"/>
</dbReference>
<dbReference type="SMART" id="SM01382">
    <property type="entry name" value="Ribosomal_L2_C"/>
    <property type="match status" value="1"/>
</dbReference>
<dbReference type="SUPFAM" id="SSF50249">
    <property type="entry name" value="Nucleic acid-binding proteins"/>
    <property type="match status" value="1"/>
</dbReference>
<dbReference type="SUPFAM" id="SSF50104">
    <property type="entry name" value="Translation proteins SH3-like domain"/>
    <property type="match status" value="1"/>
</dbReference>
<dbReference type="PROSITE" id="PS00467">
    <property type="entry name" value="RIBOSOMAL_L2"/>
    <property type="match status" value="1"/>
</dbReference>
<name>RL2_SYNPW</name>